<protein>
    <recommendedName>
        <fullName>Polypeptide N-acetylgalactosaminyltransferase 12</fullName>
        <ecNumber>2.4.1.41</ecNumber>
    </recommendedName>
    <alternativeName>
        <fullName>Polypeptide GalNAc transferase 12</fullName>
        <shortName>GalNAc-T12</shortName>
        <shortName>pp-GaNTase 12</shortName>
    </alternativeName>
    <alternativeName>
        <fullName>Protein-UDP acetylgalactosaminyltransferase 12</fullName>
    </alternativeName>
    <alternativeName>
        <fullName>UDP-GalNAc:polypeptide N-acetylgalactosaminyltransferase 12</fullName>
    </alternativeName>
</protein>
<organism>
    <name type="scientific">Mus musculus</name>
    <name type="common">Mouse</name>
    <dbReference type="NCBI Taxonomy" id="10090"/>
    <lineage>
        <taxon>Eukaryota</taxon>
        <taxon>Metazoa</taxon>
        <taxon>Chordata</taxon>
        <taxon>Craniata</taxon>
        <taxon>Vertebrata</taxon>
        <taxon>Euteleostomi</taxon>
        <taxon>Mammalia</taxon>
        <taxon>Eutheria</taxon>
        <taxon>Euarchontoglires</taxon>
        <taxon>Glires</taxon>
        <taxon>Rodentia</taxon>
        <taxon>Myomorpha</taxon>
        <taxon>Muroidea</taxon>
        <taxon>Muridae</taxon>
        <taxon>Murinae</taxon>
        <taxon>Mus</taxon>
        <taxon>Mus</taxon>
    </lineage>
</organism>
<proteinExistence type="evidence at transcript level"/>
<keyword id="KW-1015">Disulfide bond</keyword>
<keyword id="KW-0328">Glycosyltransferase</keyword>
<keyword id="KW-0333">Golgi apparatus</keyword>
<keyword id="KW-0430">Lectin</keyword>
<keyword id="KW-0464">Manganese</keyword>
<keyword id="KW-0472">Membrane</keyword>
<keyword id="KW-0479">Metal-binding</keyword>
<keyword id="KW-1185">Reference proteome</keyword>
<keyword id="KW-0735">Signal-anchor</keyword>
<keyword id="KW-0808">Transferase</keyword>
<keyword id="KW-0812">Transmembrane</keyword>
<keyword id="KW-1133">Transmembrane helix</keyword>
<feature type="chain" id="PRO_0000059129" description="Polypeptide N-acetylgalactosaminyltransferase 12">
    <location>
        <begin position="1"/>
        <end position="576"/>
    </location>
</feature>
<feature type="topological domain" description="Cytoplasmic" evidence="2">
    <location>
        <begin position="1"/>
        <end position="19"/>
    </location>
</feature>
<feature type="transmembrane region" description="Helical; Signal-anchor for type II membrane protein" evidence="2">
    <location>
        <begin position="20"/>
        <end position="37"/>
    </location>
</feature>
<feature type="topological domain" description="Lumenal" evidence="2">
    <location>
        <begin position="38"/>
        <end position="576"/>
    </location>
</feature>
<feature type="domain" description="Ricin B-type lectin" evidence="3">
    <location>
        <begin position="440"/>
        <end position="572"/>
    </location>
</feature>
<feature type="region of interest" description="Disordered" evidence="4">
    <location>
        <begin position="38"/>
        <end position="58"/>
    </location>
</feature>
<feature type="region of interest" description="Catalytic subdomain A">
    <location>
        <begin position="130"/>
        <end position="239"/>
    </location>
</feature>
<feature type="region of interest" description="Catalytic subdomain B">
    <location>
        <begin position="299"/>
        <end position="361"/>
    </location>
</feature>
<feature type="binding site" evidence="1">
    <location>
        <position position="171"/>
    </location>
    <ligand>
        <name>substrate</name>
    </ligand>
</feature>
<feature type="binding site" evidence="1">
    <location>
        <position position="200"/>
    </location>
    <ligand>
        <name>substrate</name>
    </ligand>
</feature>
<feature type="binding site" evidence="1">
    <location>
        <position position="223"/>
    </location>
    <ligand>
        <name>Mn(2+)</name>
        <dbReference type="ChEBI" id="CHEBI:29035"/>
    </ligand>
</feature>
<feature type="binding site" evidence="1">
    <location>
        <position position="225"/>
    </location>
    <ligand>
        <name>Mn(2+)</name>
        <dbReference type="ChEBI" id="CHEBI:29035"/>
    </ligand>
</feature>
<feature type="binding site" evidence="1">
    <location>
        <position position="330"/>
    </location>
    <ligand>
        <name>substrate</name>
    </ligand>
</feature>
<feature type="binding site" evidence="1">
    <location>
        <position position="358"/>
    </location>
    <ligand>
        <name>Mn(2+)</name>
        <dbReference type="ChEBI" id="CHEBI:29035"/>
    </ligand>
</feature>
<feature type="binding site" evidence="1">
    <location>
        <position position="366"/>
    </location>
    <ligand>
        <name>substrate</name>
    </ligand>
</feature>
<feature type="disulfide bond" evidence="3">
    <location>
        <begin position="120"/>
        <end position="353"/>
    </location>
</feature>
<feature type="disulfide bond" evidence="3">
    <location>
        <begin position="344"/>
        <end position="417"/>
    </location>
</feature>
<feature type="disulfide bond" evidence="3">
    <location>
        <begin position="453"/>
        <end position="474"/>
    </location>
</feature>
<feature type="disulfide bond" evidence="3">
    <location>
        <begin position="501"/>
        <end position="516"/>
    </location>
</feature>
<feature type="disulfide bond" evidence="3">
    <location>
        <begin position="542"/>
        <end position="561"/>
    </location>
</feature>
<gene>
    <name type="primary">Galnt12</name>
</gene>
<comment type="function">
    <text evidence="1">Catalyzes the initial reaction in O-linked oligosaccharide biosynthesis, the transfer of an N-acetyl-D-galactosamine residue to a serine or threonine residue on the protein receptor. Has activity toward non-glycosylated peptides such as Muc5AC, Muc1a and EA2, and no detectable activity with Muc2 and Muc7. Displays enzymatic activity toward the Gal-NAc-Muc5AC glycopeptide, but no detectable activity to mono-GalNAc-glycosylated Muc1a, Muc2, Muc7 and EA2. May play an important role in the initial step of mucin-type oligosaccharide biosynthesis in digestive organs (By similarity).</text>
</comment>
<comment type="catalytic activity">
    <reaction>
        <text>L-seryl-[protein] + UDP-N-acetyl-alpha-D-galactosamine = a 3-O-[N-acetyl-alpha-D-galactosaminyl]-L-seryl-[protein] + UDP + H(+)</text>
        <dbReference type="Rhea" id="RHEA:23956"/>
        <dbReference type="Rhea" id="RHEA-COMP:9863"/>
        <dbReference type="Rhea" id="RHEA-COMP:12788"/>
        <dbReference type="ChEBI" id="CHEBI:15378"/>
        <dbReference type="ChEBI" id="CHEBI:29999"/>
        <dbReference type="ChEBI" id="CHEBI:53604"/>
        <dbReference type="ChEBI" id="CHEBI:58223"/>
        <dbReference type="ChEBI" id="CHEBI:67138"/>
        <dbReference type="EC" id="2.4.1.41"/>
    </reaction>
</comment>
<comment type="catalytic activity">
    <reaction>
        <text>L-threonyl-[protein] + UDP-N-acetyl-alpha-D-galactosamine = a 3-O-[N-acetyl-alpha-D-galactosaminyl]-L-threonyl-[protein] + UDP + H(+)</text>
        <dbReference type="Rhea" id="RHEA:52424"/>
        <dbReference type="Rhea" id="RHEA-COMP:11060"/>
        <dbReference type="Rhea" id="RHEA-COMP:11689"/>
        <dbReference type="ChEBI" id="CHEBI:15378"/>
        <dbReference type="ChEBI" id="CHEBI:30013"/>
        <dbReference type="ChEBI" id="CHEBI:58223"/>
        <dbReference type="ChEBI" id="CHEBI:67138"/>
        <dbReference type="ChEBI" id="CHEBI:87075"/>
        <dbReference type="EC" id="2.4.1.41"/>
    </reaction>
</comment>
<comment type="cofactor">
    <cofactor evidence="1">
        <name>Mn(2+)</name>
        <dbReference type="ChEBI" id="CHEBI:29035"/>
    </cofactor>
</comment>
<comment type="pathway">
    <text>Protein modification; protein glycosylation.</text>
</comment>
<comment type="subcellular location">
    <subcellularLocation>
        <location evidence="1">Golgi apparatus membrane</location>
        <topology evidence="1">Single-pass type II membrane protein</topology>
    </subcellularLocation>
</comment>
<comment type="domain">
    <text evidence="1">There are two conserved domains in the glycosyltransferase region: the N-terminal domain (domain A, also called GT1 motif), which is probably involved in manganese coordination and substrate binding and the C-terminal domain (domain B, also called Gal/GalNAc-T motif), which is probably involved in catalytic reaction and UDP-Gal binding.</text>
</comment>
<comment type="domain">
    <text evidence="1">The ricin B-type lectin domain binds to GalNAc and contributes to the glycopeptide specificity.</text>
</comment>
<comment type="similarity">
    <text evidence="5">Belongs to the glycosyltransferase 2 family. GalNAc-T subfamily.</text>
</comment>
<comment type="online information" name="Functional Glycomics Gateway - GTase">
    <link uri="http://www.functionalglycomics.org/glycomics/molecule/jsp/glycoEnzyme/viewGlycoEnzyme.jsp?gbpId=gt_mou_520"/>
    <text>Polypeptide N-acetylgalactosaminyltransferase 12</text>
</comment>
<evidence type="ECO:0000250" key="1"/>
<evidence type="ECO:0000255" key="2"/>
<evidence type="ECO:0000255" key="3">
    <source>
        <dbReference type="PROSITE-ProRule" id="PRU00174"/>
    </source>
</evidence>
<evidence type="ECO:0000256" key="4">
    <source>
        <dbReference type="SAM" id="MobiDB-lite"/>
    </source>
</evidence>
<evidence type="ECO:0000305" key="5"/>
<dbReference type="EC" id="2.4.1.41"/>
<dbReference type="EMBL" id="AK033638">
    <property type="protein sequence ID" value="BAC28401.1"/>
    <property type="molecule type" value="mRNA"/>
</dbReference>
<dbReference type="EMBL" id="AK042133">
    <property type="protein sequence ID" value="BAC31179.1"/>
    <property type="molecule type" value="mRNA"/>
</dbReference>
<dbReference type="EMBL" id="BC056425">
    <property type="protein sequence ID" value="AAH56425.1"/>
    <property type="molecule type" value="mRNA"/>
</dbReference>
<dbReference type="CCDS" id="CCDS18158.1"/>
<dbReference type="RefSeq" id="NP_766281.1">
    <property type="nucleotide sequence ID" value="NM_172693.4"/>
</dbReference>
<dbReference type="SMR" id="Q8BGT9"/>
<dbReference type="FunCoup" id="Q8BGT9">
    <property type="interactions" value="334"/>
</dbReference>
<dbReference type="STRING" id="10090.ENSMUSP00000045721"/>
<dbReference type="CAZy" id="CBM13">
    <property type="family name" value="Carbohydrate-Binding Module Family 13"/>
</dbReference>
<dbReference type="CAZy" id="GT27">
    <property type="family name" value="Glycosyltransferase Family 27"/>
</dbReference>
<dbReference type="iPTMnet" id="Q8BGT9"/>
<dbReference type="PhosphoSitePlus" id="Q8BGT9"/>
<dbReference type="SwissPalm" id="Q8BGT9"/>
<dbReference type="jPOST" id="Q8BGT9"/>
<dbReference type="PaxDb" id="10090-ENSMUSP00000045721"/>
<dbReference type="ProteomicsDB" id="263372"/>
<dbReference type="Antibodypedia" id="29005">
    <property type="antibodies" value="88 antibodies from 14 providers"/>
</dbReference>
<dbReference type="DNASU" id="230145"/>
<dbReference type="Ensembl" id="ENSMUST00000045041.12">
    <property type="protein sequence ID" value="ENSMUSP00000045721.6"/>
    <property type="gene ID" value="ENSMUSG00000039774.13"/>
</dbReference>
<dbReference type="GeneID" id="230145"/>
<dbReference type="KEGG" id="mmu:230145"/>
<dbReference type="UCSC" id="uc008suk.1">
    <property type="organism name" value="mouse"/>
</dbReference>
<dbReference type="AGR" id="MGI:2444664"/>
<dbReference type="CTD" id="79695"/>
<dbReference type="MGI" id="MGI:2444664">
    <property type="gene designation" value="Galnt12"/>
</dbReference>
<dbReference type="VEuPathDB" id="HostDB:ENSMUSG00000039774"/>
<dbReference type="eggNOG" id="KOG3736">
    <property type="taxonomic scope" value="Eukaryota"/>
</dbReference>
<dbReference type="GeneTree" id="ENSGT00940000157173"/>
<dbReference type="HOGENOM" id="CLU_013477_0_3_1"/>
<dbReference type="InParanoid" id="Q8BGT9"/>
<dbReference type="OMA" id="SKSYFHY"/>
<dbReference type="OrthoDB" id="416652at2759"/>
<dbReference type="PhylomeDB" id="Q8BGT9"/>
<dbReference type="TreeFam" id="TF352660"/>
<dbReference type="Reactome" id="R-MMU-913709">
    <property type="pathway name" value="O-linked glycosylation of mucins"/>
</dbReference>
<dbReference type="UniPathway" id="UPA00378"/>
<dbReference type="BioGRID-ORCS" id="230145">
    <property type="hits" value="2 hits in 76 CRISPR screens"/>
</dbReference>
<dbReference type="ChiTaRS" id="Galnt12">
    <property type="organism name" value="mouse"/>
</dbReference>
<dbReference type="PRO" id="PR:Q8BGT9"/>
<dbReference type="Proteomes" id="UP000000589">
    <property type="component" value="Chromosome 4"/>
</dbReference>
<dbReference type="RNAct" id="Q8BGT9">
    <property type="molecule type" value="protein"/>
</dbReference>
<dbReference type="Bgee" id="ENSMUSG00000039774">
    <property type="expression patterns" value="Expressed in molar tooth and 163 other cell types or tissues"/>
</dbReference>
<dbReference type="ExpressionAtlas" id="Q8BGT9">
    <property type="expression patterns" value="baseline and differential"/>
</dbReference>
<dbReference type="GO" id="GO:0000139">
    <property type="term" value="C:Golgi membrane"/>
    <property type="evidence" value="ECO:0007669"/>
    <property type="project" value="UniProtKB-SubCell"/>
</dbReference>
<dbReference type="GO" id="GO:0030246">
    <property type="term" value="F:carbohydrate binding"/>
    <property type="evidence" value="ECO:0007669"/>
    <property type="project" value="UniProtKB-KW"/>
</dbReference>
<dbReference type="GO" id="GO:0046872">
    <property type="term" value="F:metal ion binding"/>
    <property type="evidence" value="ECO:0007669"/>
    <property type="project" value="UniProtKB-KW"/>
</dbReference>
<dbReference type="GO" id="GO:0004653">
    <property type="term" value="F:polypeptide N-acetylgalactosaminyltransferase activity"/>
    <property type="evidence" value="ECO:0007669"/>
    <property type="project" value="UniProtKB-EC"/>
</dbReference>
<dbReference type="GO" id="GO:0006486">
    <property type="term" value="P:protein glycosylation"/>
    <property type="evidence" value="ECO:0007669"/>
    <property type="project" value="UniProtKB-UniPathway"/>
</dbReference>
<dbReference type="CDD" id="cd02510">
    <property type="entry name" value="pp-GalNAc-T"/>
    <property type="match status" value="1"/>
</dbReference>
<dbReference type="FunFam" id="2.80.10.50:FF:000057">
    <property type="entry name" value="Polypeptide N-acetylgalactosaminyltransferase"/>
    <property type="match status" value="1"/>
</dbReference>
<dbReference type="FunFam" id="3.90.550.10:FF:000021">
    <property type="entry name" value="Polypeptide N-acetylgalactosaminyltransferase"/>
    <property type="match status" value="1"/>
</dbReference>
<dbReference type="Gene3D" id="2.80.10.50">
    <property type="match status" value="1"/>
</dbReference>
<dbReference type="Gene3D" id="3.90.550.10">
    <property type="entry name" value="Spore Coat Polysaccharide Biosynthesis Protein SpsA, Chain A"/>
    <property type="match status" value="1"/>
</dbReference>
<dbReference type="InterPro" id="IPR045885">
    <property type="entry name" value="GalNAc-T"/>
</dbReference>
<dbReference type="InterPro" id="IPR001173">
    <property type="entry name" value="Glyco_trans_2-like"/>
</dbReference>
<dbReference type="InterPro" id="IPR029044">
    <property type="entry name" value="Nucleotide-diphossugar_trans"/>
</dbReference>
<dbReference type="InterPro" id="IPR035992">
    <property type="entry name" value="Ricin_B-like_lectins"/>
</dbReference>
<dbReference type="InterPro" id="IPR000772">
    <property type="entry name" value="Ricin_B_lectin"/>
</dbReference>
<dbReference type="PANTHER" id="PTHR11675">
    <property type="entry name" value="N-ACETYLGALACTOSAMINYLTRANSFERASE"/>
    <property type="match status" value="1"/>
</dbReference>
<dbReference type="PANTHER" id="PTHR11675:SF18">
    <property type="entry name" value="POLYPEPTIDE N-ACETYLGALACTOSAMINYLTRANSFERASE 12"/>
    <property type="match status" value="1"/>
</dbReference>
<dbReference type="Pfam" id="PF00535">
    <property type="entry name" value="Glycos_transf_2"/>
    <property type="match status" value="1"/>
</dbReference>
<dbReference type="Pfam" id="PF00652">
    <property type="entry name" value="Ricin_B_lectin"/>
    <property type="match status" value="1"/>
</dbReference>
<dbReference type="SMART" id="SM00458">
    <property type="entry name" value="RICIN"/>
    <property type="match status" value="1"/>
</dbReference>
<dbReference type="SUPFAM" id="SSF53448">
    <property type="entry name" value="Nucleotide-diphospho-sugar transferases"/>
    <property type="match status" value="1"/>
</dbReference>
<dbReference type="SUPFAM" id="SSF50370">
    <property type="entry name" value="Ricin B-like lectins"/>
    <property type="match status" value="1"/>
</dbReference>
<dbReference type="PROSITE" id="PS50231">
    <property type="entry name" value="RICIN_B_LECTIN"/>
    <property type="match status" value="1"/>
</dbReference>
<accession>Q8BGT9</accession>
<sequence>MWGRAVRRRCPRGLRRGREALLALLALAGLGALLRARSRSGTVDPGPPRTPLPGRHEPVLPRPPLPADALGAHGEAVRLQLQGEELRLQEESVKQHQINIYLSDRISLHRRLPERWNPLCREVKYDYDNLPKTSVVIAFYNEAWSTLLRTVYSVLETSPDILLEEVILVDDYSDREHLKERLANELSQLPKVRLIRASRREGLVRARLLGASAARGEVLTFLDCHCECHEGWLEPLLQRIHEKESAVVCPVIDVIDWNTFEYLGNSGEPQIGGFDWRLVFTWHVVPQRERQSMRSPIDVIRSPTMAGGLFAVSKRYFDYLGSYDTGMEVWGGENLEFSFRIWQCGGTLETHPCSHVGHVFPKQAPYSRSKALANSVRAAEVWMDEFKELYYHRNPQARLEPFGDVTERKKLRAKLQCKDFKWFLDTVYPELHVPEDRPGFFGMLQNRGLRGYCLDYNPPNENHVEGHQVLLYLCHGMGQNQFFEYTTRKEIRYNTRQPEACITVEDGKDTLVMDLCRETVPENQEFILQEDGTLVHKHSRKCVEATEKVLDNGFAPYLRDCTNSDNQRWFFKERMS</sequence>
<name>GLT12_MOUSE</name>
<reference key="1">
    <citation type="journal article" date="2005" name="Science">
        <title>The transcriptional landscape of the mammalian genome.</title>
        <authorList>
            <person name="Carninci P."/>
            <person name="Kasukawa T."/>
            <person name="Katayama S."/>
            <person name="Gough J."/>
            <person name="Frith M.C."/>
            <person name="Maeda N."/>
            <person name="Oyama R."/>
            <person name="Ravasi T."/>
            <person name="Lenhard B."/>
            <person name="Wells C."/>
            <person name="Kodzius R."/>
            <person name="Shimokawa K."/>
            <person name="Bajic V.B."/>
            <person name="Brenner S.E."/>
            <person name="Batalov S."/>
            <person name="Forrest A.R."/>
            <person name="Zavolan M."/>
            <person name="Davis M.J."/>
            <person name="Wilming L.G."/>
            <person name="Aidinis V."/>
            <person name="Allen J.E."/>
            <person name="Ambesi-Impiombato A."/>
            <person name="Apweiler R."/>
            <person name="Aturaliya R.N."/>
            <person name="Bailey T.L."/>
            <person name="Bansal M."/>
            <person name="Baxter L."/>
            <person name="Beisel K.W."/>
            <person name="Bersano T."/>
            <person name="Bono H."/>
            <person name="Chalk A.M."/>
            <person name="Chiu K.P."/>
            <person name="Choudhary V."/>
            <person name="Christoffels A."/>
            <person name="Clutterbuck D.R."/>
            <person name="Crowe M.L."/>
            <person name="Dalla E."/>
            <person name="Dalrymple B.P."/>
            <person name="de Bono B."/>
            <person name="Della Gatta G."/>
            <person name="di Bernardo D."/>
            <person name="Down T."/>
            <person name="Engstrom P."/>
            <person name="Fagiolini M."/>
            <person name="Faulkner G."/>
            <person name="Fletcher C.F."/>
            <person name="Fukushima T."/>
            <person name="Furuno M."/>
            <person name="Futaki S."/>
            <person name="Gariboldi M."/>
            <person name="Georgii-Hemming P."/>
            <person name="Gingeras T.R."/>
            <person name="Gojobori T."/>
            <person name="Green R.E."/>
            <person name="Gustincich S."/>
            <person name="Harbers M."/>
            <person name="Hayashi Y."/>
            <person name="Hensch T.K."/>
            <person name="Hirokawa N."/>
            <person name="Hill D."/>
            <person name="Huminiecki L."/>
            <person name="Iacono M."/>
            <person name="Ikeo K."/>
            <person name="Iwama A."/>
            <person name="Ishikawa T."/>
            <person name="Jakt M."/>
            <person name="Kanapin A."/>
            <person name="Katoh M."/>
            <person name="Kawasawa Y."/>
            <person name="Kelso J."/>
            <person name="Kitamura H."/>
            <person name="Kitano H."/>
            <person name="Kollias G."/>
            <person name="Krishnan S.P."/>
            <person name="Kruger A."/>
            <person name="Kummerfeld S.K."/>
            <person name="Kurochkin I.V."/>
            <person name="Lareau L.F."/>
            <person name="Lazarevic D."/>
            <person name="Lipovich L."/>
            <person name="Liu J."/>
            <person name="Liuni S."/>
            <person name="McWilliam S."/>
            <person name="Madan Babu M."/>
            <person name="Madera M."/>
            <person name="Marchionni L."/>
            <person name="Matsuda H."/>
            <person name="Matsuzawa S."/>
            <person name="Miki H."/>
            <person name="Mignone F."/>
            <person name="Miyake S."/>
            <person name="Morris K."/>
            <person name="Mottagui-Tabar S."/>
            <person name="Mulder N."/>
            <person name="Nakano N."/>
            <person name="Nakauchi H."/>
            <person name="Ng P."/>
            <person name="Nilsson R."/>
            <person name="Nishiguchi S."/>
            <person name="Nishikawa S."/>
            <person name="Nori F."/>
            <person name="Ohara O."/>
            <person name="Okazaki Y."/>
            <person name="Orlando V."/>
            <person name="Pang K.C."/>
            <person name="Pavan W.J."/>
            <person name="Pavesi G."/>
            <person name="Pesole G."/>
            <person name="Petrovsky N."/>
            <person name="Piazza S."/>
            <person name="Reed J."/>
            <person name="Reid J.F."/>
            <person name="Ring B.Z."/>
            <person name="Ringwald M."/>
            <person name="Rost B."/>
            <person name="Ruan Y."/>
            <person name="Salzberg S.L."/>
            <person name="Sandelin A."/>
            <person name="Schneider C."/>
            <person name="Schoenbach C."/>
            <person name="Sekiguchi K."/>
            <person name="Semple C.A."/>
            <person name="Seno S."/>
            <person name="Sessa L."/>
            <person name="Sheng Y."/>
            <person name="Shibata Y."/>
            <person name="Shimada H."/>
            <person name="Shimada K."/>
            <person name="Silva D."/>
            <person name="Sinclair B."/>
            <person name="Sperling S."/>
            <person name="Stupka E."/>
            <person name="Sugiura K."/>
            <person name="Sultana R."/>
            <person name="Takenaka Y."/>
            <person name="Taki K."/>
            <person name="Tammoja K."/>
            <person name="Tan S.L."/>
            <person name="Tang S."/>
            <person name="Taylor M.S."/>
            <person name="Tegner J."/>
            <person name="Teichmann S.A."/>
            <person name="Ueda H.R."/>
            <person name="van Nimwegen E."/>
            <person name="Verardo R."/>
            <person name="Wei C.L."/>
            <person name="Yagi K."/>
            <person name="Yamanishi H."/>
            <person name="Zabarovsky E."/>
            <person name="Zhu S."/>
            <person name="Zimmer A."/>
            <person name="Hide W."/>
            <person name="Bult C."/>
            <person name="Grimmond S.M."/>
            <person name="Teasdale R.D."/>
            <person name="Liu E.T."/>
            <person name="Brusic V."/>
            <person name="Quackenbush J."/>
            <person name="Wahlestedt C."/>
            <person name="Mattick J.S."/>
            <person name="Hume D.A."/>
            <person name="Kai C."/>
            <person name="Sasaki D."/>
            <person name="Tomaru Y."/>
            <person name="Fukuda S."/>
            <person name="Kanamori-Katayama M."/>
            <person name="Suzuki M."/>
            <person name="Aoki J."/>
            <person name="Arakawa T."/>
            <person name="Iida J."/>
            <person name="Imamura K."/>
            <person name="Itoh M."/>
            <person name="Kato T."/>
            <person name="Kawaji H."/>
            <person name="Kawagashira N."/>
            <person name="Kawashima T."/>
            <person name="Kojima M."/>
            <person name="Kondo S."/>
            <person name="Konno H."/>
            <person name="Nakano K."/>
            <person name="Ninomiya N."/>
            <person name="Nishio T."/>
            <person name="Okada M."/>
            <person name="Plessy C."/>
            <person name="Shibata K."/>
            <person name="Shiraki T."/>
            <person name="Suzuki S."/>
            <person name="Tagami M."/>
            <person name="Waki K."/>
            <person name="Watahiki A."/>
            <person name="Okamura-Oho Y."/>
            <person name="Suzuki H."/>
            <person name="Kawai J."/>
            <person name="Hayashizaki Y."/>
        </authorList>
    </citation>
    <scope>NUCLEOTIDE SEQUENCE [LARGE SCALE MRNA]</scope>
    <source>
        <strain>C57BL/6J</strain>
        <tissue>Cecum</tissue>
        <tissue>Thymus</tissue>
    </source>
</reference>
<reference key="2">
    <citation type="journal article" date="2004" name="Genome Res.">
        <title>The status, quality, and expansion of the NIH full-length cDNA project: the Mammalian Gene Collection (MGC).</title>
        <authorList>
            <consortium name="The MGC Project Team"/>
        </authorList>
    </citation>
    <scope>NUCLEOTIDE SEQUENCE [LARGE SCALE MRNA]</scope>
    <source>
        <strain>C57BL/6J</strain>
        <tissue>Brain</tissue>
    </source>
</reference>